<feature type="chain" id="PRO_0000376701" description="2,3,4,5-tetrahydropyridine-2,6-dicarboxylate N-acetyltransferase">
    <location>
        <begin position="1"/>
        <end position="239"/>
    </location>
</feature>
<accession>B9DP25</accession>
<protein>
    <recommendedName>
        <fullName evidence="1">2,3,4,5-tetrahydropyridine-2,6-dicarboxylate N-acetyltransferase</fullName>
        <ecNumber evidence="1">2.3.1.89</ecNumber>
    </recommendedName>
    <alternativeName>
        <fullName evidence="1">Tetrahydrodipicolinate N-acetyltransferase</fullName>
        <shortName evidence="1">THP acetyltransferase</shortName>
        <shortName evidence="1">Tetrahydropicolinate acetylase</shortName>
    </alternativeName>
</protein>
<keyword id="KW-0012">Acyltransferase</keyword>
<keyword id="KW-0028">Amino-acid biosynthesis</keyword>
<keyword id="KW-0220">Diaminopimelate biosynthesis</keyword>
<keyword id="KW-0457">Lysine biosynthesis</keyword>
<keyword id="KW-1185">Reference proteome</keyword>
<keyword id="KW-0677">Repeat</keyword>
<keyword id="KW-0808">Transferase</keyword>
<comment type="function">
    <text evidence="1">Catalyzes the transfer of an acetyl group from acetyl-CoA to tetrahydrodipicolinate.</text>
</comment>
<comment type="catalytic activity">
    <reaction evidence="1">
        <text>(S)-2,3,4,5-tetrahydrodipicolinate + acetyl-CoA + H2O = L-2-acetamido-6-oxoheptanedioate + CoA</text>
        <dbReference type="Rhea" id="RHEA:13085"/>
        <dbReference type="ChEBI" id="CHEBI:15377"/>
        <dbReference type="ChEBI" id="CHEBI:16845"/>
        <dbReference type="ChEBI" id="CHEBI:57287"/>
        <dbReference type="ChEBI" id="CHEBI:57288"/>
        <dbReference type="ChEBI" id="CHEBI:58117"/>
        <dbReference type="EC" id="2.3.1.89"/>
    </reaction>
</comment>
<comment type="pathway">
    <text evidence="1">Amino-acid biosynthesis; L-lysine biosynthesis via DAP pathway; LL-2,6-diaminopimelate from (S)-tetrahydrodipicolinate (acetylase route): step 1/3.</text>
</comment>
<comment type="similarity">
    <text evidence="1">Belongs to the transferase hexapeptide repeat family. DapH subfamily.</text>
</comment>
<sequence>MVKDFSAEEIIQYISDAKKSTPLKVYVNGVLGQVTFPDSFKVFGSENSKVIFCEASDWEDFYNDNKNYIEEVEIEMDRRNSAIPLKDLRNTNARIEPGAFIREHAVIEDGAVVMMGATINIGAVVGEGTMIDMNATLGGRATTGKNVHVGAGAVLAGVIEPPSASPVVIEDNVLIGANAVILEGVRVGEGAIVAAGAIVTQDVPAGAVVAGTPAKVIKQTSEVEDSKREIVSALRKLND</sequence>
<organism>
    <name type="scientific">Staphylococcus carnosus (strain TM300)</name>
    <dbReference type="NCBI Taxonomy" id="396513"/>
    <lineage>
        <taxon>Bacteria</taxon>
        <taxon>Bacillati</taxon>
        <taxon>Bacillota</taxon>
        <taxon>Bacilli</taxon>
        <taxon>Bacillales</taxon>
        <taxon>Staphylococcaceae</taxon>
        <taxon>Staphylococcus</taxon>
    </lineage>
</organism>
<gene>
    <name evidence="1" type="primary">dapH</name>
    <name type="ordered locus">Sca_1041</name>
</gene>
<proteinExistence type="inferred from homology"/>
<name>DAPH_STACT</name>
<dbReference type="EC" id="2.3.1.89" evidence="1"/>
<dbReference type="EMBL" id="AM295250">
    <property type="protein sequence ID" value="CAL27949.1"/>
    <property type="molecule type" value="Genomic_DNA"/>
</dbReference>
<dbReference type="RefSeq" id="WP_015900290.1">
    <property type="nucleotide sequence ID" value="NC_012121.1"/>
</dbReference>
<dbReference type="SMR" id="B9DP25"/>
<dbReference type="GeneID" id="93793465"/>
<dbReference type="KEGG" id="sca:SCA_1041"/>
<dbReference type="eggNOG" id="COG2171">
    <property type="taxonomic scope" value="Bacteria"/>
</dbReference>
<dbReference type="HOGENOM" id="CLU_103751_0_0_9"/>
<dbReference type="OrthoDB" id="9788080at2"/>
<dbReference type="BioCyc" id="SCAR396513:SCA_RS05215-MONOMER"/>
<dbReference type="UniPathway" id="UPA00034">
    <property type="reaction ID" value="UER00022"/>
</dbReference>
<dbReference type="Proteomes" id="UP000000444">
    <property type="component" value="Chromosome"/>
</dbReference>
<dbReference type="GO" id="GO:0047200">
    <property type="term" value="F:tetrahydrodipicolinate N-acetyltransferase activity"/>
    <property type="evidence" value="ECO:0007669"/>
    <property type="project" value="UniProtKB-EC"/>
</dbReference>
<dbReference type="GO" id="GO:0019877">
    <property type="term" value="P:diaminopimelate biosynthetic process"/>
    <property type="evidence" value="ECO:0007669"/>
    <property type="project" value="UniProtKB-UniRule"/>
</dbReference>
<dbReference type="GO" id="GO:0009089">
    <property type="term" value="P:lysine biosynthetic process via diaminopimelate"/>
    <property type="evidence" value="ECO:0007669"/>
    <property type="project" value="UniProtKB-UniRule"/>
</dbReference>
<dbReference type="CDD" id="cd03350">
    <property type="entry name" value="LbH_THP_succinylT"/>
    <property type="match status" value="1"/>
</dbReference>
<dbReference type="Gene3D" id="2.160.10.10">
    <property type="entry name" value="Hexapeptide repeat proteins"/>
    <property type="match status" value="1"/>
</dbReference>
<dbReference type="Gene3D" id="3.30.70.250">
    <property type="entry name" value="Malonyl-CoA ACP transacylase, ACP-binding"/>
    <property type="match status" value="1"/>
</dbReference>
<dbReference type="HAMAP" id="MF_01691">
    <property type="entry name" value="DapH"/>
    <property type="match status" value="1"/>
</dbReference>
<dbReference type="InterPro" id="IPR019873">
    <property type="entry name" value="DapH"/>
</dbReference>
<dbReference type="InterPro" id="IPR013710">
    <property type="entry name" value="DapH_N"/>
</dbReference>
<dbReference type="InterPro" id="IPR001451">
    <property type="entry name" value="Hexapep"/>
</dbReference>
<dbReference type="InterPro" id="IPR018357">
    <property type="entry name" value="Hexapep_transf_CS"/>
</dbReference>
<dbReference type="InterPro" id="IPR050179">
    <property type="entry name" value="Trans_hexapeptide_repeat"/>
</dbReference>
<dbReference type="InterPro" id="IPR011004">
    <property type="entry name" value="Trimer_LpxA-like_sf"/>
</dbReference>
<dbReference type="NCBIfam" id="TIGR03532">
    <property type="entry name" value="DapD_Ac"/>
    <property type="match status" value="1"/>
</dbReference>
<dbReference type="PANTHER" id="PTHR43300:SF10">
    <property type="entry name" value="2,3,4,5-TETRAHYDROPYRIDINE-2,6-DICARBOXYLATE N-ACETYLTRANSFERASE"/>
    <property type="match status" value="1"/>
</dbReference>
<dbReference type="PANTHER" id="PTHR43300">
    <property type="entry name" value="ACETYLTRANSFERASE"/>
    <property type="match status" value="1"/>
</dbReference>
<dbReference type="Pfam" id="PF08503">
    <property type="entry name" value="DapH_N"/>
    <property type="match status" value="1"/>
</dbReference>
<dbReference type="Pfam" id="PF00132">
    <property type="entry name" value="Hexapep"/>
    <property type="match status" value="1"/>
</dbReference>
<dbReference type="Pfam" id="PF14602">
    <property type="entry name" value="Hexapep_2"/>
    <property type="match status" value="1"/>
</dbReference>
<dbReference type="SUPFAM" id="SSF51161">
    <property type="entry name" value="Trimeric LpxA-like enzymes"/>
    <property type="match status" value="1"/>
</dbReference>
<dbReference type="PROSITE" id="PS00101">
    <property type="entry name" value="HEXAPEP_TRANSFERASES"/>
    <property type="match status" value="1"/>
</dbReference>
<reference key="1">
    <citation type="journal article" date="2009" name="Appl. Environ. Microbiol.">
        <title>Genome analysis of the meat starter culture bacterium Staphylococcus carnosus TM300.</title>
        <authorList>
            <person name="Rosenstein R."/>
            <person name="Nerz C."/>
            <person name="Biswas L."/>
            <person name="Resch A."/>
            <person name="Raddatz G."/>
            <person name="Schuster S.C."/>
            <person name="Goetz F."/>
        </authorList>
    </citation>
    <scope>NUCLEOTIDE SEQUENCE [LARGE SCALE GENOMIC DNA]</scope>
    <source>
        <strain>TM300</strain>
    </source>
</reference>
<evidence type="ECO:0000255" key="1">
    <source>
        <dbReference type="HAMAP-Rule" id="MF_01691"/>
    </source>
</evidence>